<accession>Q8TGS9</accession>
<accession>D6VZH6</accession>
<keyword id="KW-1185">Reference proteome</keyword>
<dbReference type="EMBL" id="Z48613">
    <property type="status" value="NOT_ANNOTATED_CDS"/>
    <property type="molecule type" value="Genomic_DNA"/>
</dbReference>
<dbReference type="EMBL" id="AF479906">
    <property type="protein sequence ID" value="AAL79219.1"/>
    <property type="molecule type" value="Genomic_DNA"/>
</dbReference>
<dbReference type="EMBL" id="BK006946">
    <property type="protein sequence ID" value="DAA09900.1"/>
    <property type="molecule type" value="Genomic_DNA"/>
</dbReference>
<dbReference type="RefSeq" id="NP_878140.1">
    <property type="nucleotide sequence ID" value="NM_001184613.1"/>
</dbReference>
<dbReference type="BioGRID" id="37040">
    <property type="interactions" value="45"/>
</dbReference>
<dbReference type="FunCoup" id="Q8TGS9">
    <property type="interactions" value="13"/>
</dbReference>
<dbReference type="PaxDb" id="4932-YMR001C-A"/>
<dbReference type="EnsemblFungi" id="YMR001C-A_mRNA">
    <property type="protein sequence ID" value="YMR001C-A"/>
    <property type="gene ID" value="YMR001C-A"/>
</dbReference>
<dbReference type="GeneID" id="1466498"/>
<dbReference type="KEGG" id="sce:YMR001C-A"/>
<dbReference type="AGR" id="SGD:S000028691"/>
<dbReference type="SGD" id="S000028691">
    <property type="gene designation" value="YMR001C-A"/>
</dbReference>
<dbReference type="VEuPathDB" id="FungiDB:YMR001C-A"/>
<dbReference type="HOGENOM" id="CLU_2655839_0_0_1"/>
<dbReference type="InParanoid" id="Q8TGS9"/>
<dbReference type="OrthoDB" id="10274723at2759"/>
<dbReference type="BioCyc" id="YEAST:G3O-33030-MONOMER"/>
<dbReference type="BioGRID-ORCS" id="1466498">
    <property type="hits" value="0 hits in 10 CRISPR screens"/>
</dbReference>
<dbReference type="PRO" id="PR:Q8TGS9"/>
<dbReference type="Proteomes" id="UP000002311">
    <property type="component" value="Chromosome XIII"/>
</dbReference>
<dbReference type="RNAct" id="Q8TGS9">
    <property type="molecule type" value="protein"/>
</dbReference>
<sequence length="76" mass="8710">MIFECTSFETRHILNSYSCATQLSYNTYRITEKVNPIQAAVSKNNKPFVSNSDSAFFPIFSSFNFVAYTTLTFKKT</sequence>
<organism>
    <name type="scientific">Saccharomyces cerevisiae (strain ATCC 204508 / S288c)</name>
    <name type="common">Baker's yeast</name>
    <dbReference type="NCBI Taxonomy" id="559292"/>
    <lineage>
        <taxon>Eukaryota</taxon>
        <taxon>Fungi</taxon>
        <taxon>Dikarya</taxon>
        <taxon>Ascomycota</taxon>
        <taxon>Saccharomycotina</taxon>
        <taxon>Saccharomycetes</taxon>
        <taxon>Saccharomycetales</taxon>
        <taxon>Saccharomycetaceae</taxon>
        <taxon>Saccharomyces</taxon>
    </lineage>
</organism>
<name>YM001_YEAST</name>
<reference key="1">
    <citation type="journal article" date="1997" name="Nature">
        <title>The nucleotide sequence of Saccharomyces cerevisiae chromosome XIII.</title>
        <authorList>
            <person name="Bowman S."/>
            <person name="Churcher C.M."/>
            <person name="Badcock K."/>
            <person name="Brown D."/>
            <person name="Chillingworth T."/>
            <person name="Connor R."/>
            <person name="Dedman K."/>
            <person name="Devlin K."/>
            <person name="Gentles S."/>
            <person name="Hamlin N."/>
            <person name="Hunt S."/>
            <person name="Jagels K."/>
            <person name="Lye G."/>
            <person name="Moule S."/>
            <person name="Odell C."/>
            <person name="Pearson D."/>
            <person name="Rajandream M.A."/>
            <person name="Rice P."/>
            <person name="Skelton J."/>
            <person name="Walsh S.V."/>
            <person name="Whitehead S."/>
            <person name="Barrell B.G."/>
        </authorList>
    </citation>
    <scope>NUCLEOTIDE SEQUENCE [LARGE SCALE GENOMIC DNA]</scope>
    <source>
        <strain>ATCC 204508 / S288c</strain>
    </source>
</reference>
<reference key="2">
    <citation type="journal article" date="2014" name="G3 (Bethesda)">
        <title>The reference genome sequence of Saccharomyces cerevisiae: Then and now.</title>
        <authorList>
            <person name="Engel S.R."/>
            <person name="Dietrich F.S."/>
            <person name="Fisk D.G."/>
            <person name="Binkley G."/>
            <person name="Balakrishnan R."/>
            <person name="Costanzo M.C."/>
            <person name="Dwight S.S."/>
            <person name="Hitz B.C."/>
            <person name="Karra K."/>
            <person name="Nash R.S."/>
            <person name="Weng S."/>
            <person name="Wong E.D."/>
            <person name="Lloyd P."/>
            <person name="Skrzypek M.S."/>
            <person name="Miyasato S.R."/>
            <person name="Simison M."/>
            <person name="Cherry J.M."/>
        </authorList>
    </citation>
    <scope>GENOME REANNOTATION</scope>
    <source>
        <strain>ATCC 204508 / S288c</strain>
    </source>
</reference>
<reference key="3">
    <citation type="journal article" date="2002" name="Nat. Biotechnol.">
        <title>An integrated approach for finding overlooked genes in yeast.</title>
        <authorList>
            <person name="Kumar A."/>
            <person name="Harrison P.M."/>
            <person name="Cheung K.-H."/>
            <person name="Lan N."/>
            <person name="Echols N."/>
            <person name="Bertone P."/>
            <person name="Miller P."/>
            <person name="Gerstein M.B."/>
            <person name="Snyder M."/>
        </authorList>
    </citation>
    <scope>NUCLEOTIDE SEQUENCE [GENOMIC DNA]</scope>
</reference>
<proteinExistence type="predicted"/>
<gene>
    <name type="ordered locus">YMR001C-A</name>
</gene>
<feature type="chain" id="PRO_0000247784" description="Uncharacterized protein YMR001C-A">
    <location>
        <begin position="1"/>
        <end position="76"/>
    </location>
</feature>
<protein>
    <recommendedName>
        <fullName>Uncharacterized protein YMR001C-A</fullName>
    </recommendedName>
</protein>